<name>P5I13_RAT</name>
<dbReference type="EMBL" id="BC158678">
    <property type="protein sequence ID" value="AAI58679.1"/>
    <property type="molecule type" value="mRNA"/>
</dbReference>
<dbReference type="RefSeq" id="NP_001099288.1">
    <property type="nucleotide sequence ID" value="NM_001105818.1"/>
</dbReference>
<dbReference type="FunCoup" id="B0BN44">
    <property type="interactions" value="228"/>
</dbReference>
<dbReference type="STRING" id="10116.ENSRNOP00000010691"/>
<dbReference type="GlyGen" id="B0BN44">
    <property type="glycosylation" value="4 sites"/>
</dbReference>
<dbReference type="PhosphoSitePlus" id="B0BN44"/>
<dbReference type="PaxDb" id="10116-ENSRNOP00000010691"/>
<dbReference type="Ensembl" id="ENSRNOT00000010691.7">
    <property type="protein sequence ID" value="ENSRNOP00000010691.5"/>
    <property type="gene ID" value="ENSRNOG00000022615.6"/>
</dbReference>
<dbReference type="GeneID" id="287550"/>
<dbReference type="KEGG" id="rno:287550"/>
<dbReference type="AGR" id="RGD:1559818"/>
<dbReference type="CTD" id="90313"/>
<dbReference type="RGD" id="1559818">
    <property type="gene designation" value="Tp53i13"/>
</dbReference>
<dbReference type="eggNOG" id="ENOG502S8FW">
    <property type="taxonomic scope" value="Eukaryota"/>
</dbReference>
<dbReference type="GeneTree" id="ENSGT00390000008202"/>
<dbReference type="HOGENOM" id="CLU_058647_0_0_1"/>
<dbReference type="InParanoid" id="B0BN44"/>
<dbReference type="OMA" id="WGMALEM"/>
<dbReference type="OrthoDB" id="88542at9989"/>
<dbReference type="PhylomeDB" id="B0BN44"/>
<dbReference type="TreeFam" id="TF314247"/>
<dbReference type="PRO" id="PR:B0BN44"/>
<dbReference type="Proteomes" id="UP000002494">
    <property type="component" value="Chromosome 10"/>
</dbReference>
<dbReference type="Bgee" id="ENSRNOG00000022615">
    <property type="expression patterns" value="Expressed in pancreas and 19 other cell types or tissues"/>
</dbReference>
<dbReference type="GO" id="GO:0005737">
    <property type="term" value="C:cytoplasm"/>
    <property type="evidence" value="ECO:0000266"/>
    <property type="project" value="RGD"/>
</dbReference>
<dbReference type="GO" id="GO:0005886">
    <property type="term" value="C:plasma membrane"/>
    <property type="evidence" value="ECO:0007669"/>
    <property type="project" value="UniProtKB-SubCell"/>
</dbReference>
<dbReference type="GO" id="GO:0045786">
    <property type="term" value="P:negative regulation of cell cycle"/>
    <property type="evidence" value="ECO:0000266"/>
    <property type="project" value="RGD"/>
</dbReference>
<dbReference type="GO" id="GO:0009411">
    <property type="term" value="P:response to UV"/>
    <property type="evidence" value="ECO:0000266"/>
    <property type="project" value="RGD"/>
</dbReference>
<dbReference type="GO" id="GO:0009410">
    <property type="term" value="P:response to xenobiotic stimulus"/>
    <property type="evidence" value="ECO:0000266"/>
    <property type="project" value="RGD"/>
</dbReference>
<dbReference type="PANTHER" id="PTHR34179">
    <property type="entry name" value="TUMOR PROTEIN P53-INDUCIBLE PROTEIN 13"/>
    <property type="match status" value="1"/>
</dbReference>
<dbReference type="PANTHER" id="PTHR34179:SF1">
    <property type="entry name" value="TUMOR PROTEIN P53-INDUCIBLE PROTEIN 13"/>
    <property type="match status" value="1"/>
</dbReference>
<organism>
    <name type="scientific">Rattus norvegicus</name>
    <name type="common">Rat</name>
    <dbReference type="NCBI Taxonomy" id="10116"/>
    <lineage>
        <taxon>Eukaryota</taxon>
        <taxon>Metazoa</taxon>
        <taxon>Chordata</taxon>
        <taxon>Craniata</taxon>
        <taxon>Vertebrata</taxon>
        <taxon>Euteleostomi</taxon>
        <taxon>Mammalia</taxon>
        <taxon>Eutheria</taxon>
        <taxon>Euarchontoglires</taxon>
        <taxon>Glires</taxon>
        <taxon>Rodentia</taxon>
        <taxon>Myomorpha</taxon>
        <taxon>Muroidea</taxon>
        <taxon>Muridae</taxon>
        <taxon>Murinae</taxon>
        <taxon>Rattus</taxon>
    </lineage>
</organism>
<proteinExistence type="evidence at transcript level"/>
<protein>
    <recommendedName>
        <fullName>Tumor protein p53-inducible protein 13</fullName>
    </recommendedName>
</protein>
<keyword id="KW-1003">Cell membrane</keyword>
<keyword id="KW-0963">Cytoplasm</keyword>
<keyword id="KW-0472">Membrane</keyword>
<keyword id="KW-1185">Reference proteome</keyword>
<keyword id="KW-0732">Signal</keyword>
<keyword id="KW-0812">Transmembrane</keyword>
<keyword id="KW-1133">Transmembrane helix</keyword>
<evidence type="ECO:0000250" key="1"/>
<evidence type="ECO:0000255" key="2"/>
<evidence type="ECO:0000256" key="3">
    <source>
        <dbReference type="SAM" id="MobiDB-lite"/>
    </source>
</evidence>
<evidence type="ECO:0000305" key="4"/>
<accession>B0BN44</accession>
<comment type="function">
    <text evidence="1">May act as a tumor suppressor. Inhibits tumor cell growth, when overexpressed (By similarity).</text>
</comment>
<comment type="subcellular location">
    <subcellularLocation>
        <location evidence="4">Cell membrane</location>
        <topology evidence="4">Single-pass type I membrane protein</topology>
        <orientation evidence="4">Extracellular side</orientation>
    </subcellularLocation>
    <subcellularLocation>
        <location evidence="1">Cytoplasm</location>
    </subcellularLocation>
    <text evidence="1">Associates with unknown subcellular structures in the cytoplasm.</text>
</comment>
<reference key="1">
    <citation type="journal article" date="2004" name="Genome Res.">
        <title>The status, quality, and expansion of the NIH full-length cDNA project: the Mammalian Gene Collection (MGC).</title>
        <authorList>
            <consortium name="The MGC Project Team"/>
        </authorList>
    </citation>
    <scope>NUCLEOTIDE SEQUENCE [LARGE SCALE MRNA]</scope>
    <source>
        <tissue>Liver</tissue>
    </source>
</reference>
<feature type="signal peptide" evidence="2">
    <location>
        <begin position="1"/>
        <end position="27"/>
    </location>
</feature>
<feature type="chain" id="PRO_0000333826" description="Tumor protein p53-inducible protein 13">
    <location>
        <begin position="28"/>
        <end position="388"/>
    </location>
</feature>
<feature type="topological domain" description="Extracellular" evidence="2">
    <location>
        <begin position="28"/>
        <end position="304"/>
    </location>
</feature>
<feature type="transmembrane region" description="Helical" evidence="2">
    <location>
        <begin position="305"/>
        <end position="325"/>
    </location>
</feature>
<feature type="topological domain" description="Cytoplasmic" evidence="2">
    <location>
        <begin position="326"/>
        <end position="388"/>
    </location>
</feature>
<feature type="region of interest" description="Disordered" evidence="3">
    <location>
        <begin position="361"/>
        <end position="388"/>
    </location>
</feature>
<feature type="compositionally biased region" description="Basic residues" evidence="3">
    <location>
        <begin position="361"/>
        <end position="372"/>
    </location>
</feature>
<gene>
    <name type="primary">Tp53i13</name>
    <name type="synonym">Trp53i13</name>
</gene>
<sequence length="388" mass="42710">MVPPPPPPSRLLLVALVGLLSLHEVVAEPAEEAGTRCPEGLWPLPPQVLPRVTYTQVRQGQAEGITFFYHPCAHLWLKLQLAVLAHLCVAKPTLIPDFSLPWDRPLVLTAWGTALEMAWIEPAWAAQWLKRQWRRRRRKQRKSVWFLSDNLFGPTPMMPAPRRGKLCGRRCVQAPTLAFALRSWRPPGVEVTSRGPRRSSLSVVKKRGLRAALGLQSTPSGLRVSLASSQSLKAQQRTLGNSSVAPVSLMTGVTEGNGRFRTEAQMPSGQGNPGGCACPGQVSPAPRAAVPPRVARGPTPRTEEAAWAAMALTFLLVLLTLATLCTRLHRNFRRSESIYWGPTSDSQDTVAAILKRRLPLPSRRIKRSRRRPLLPPTPDSGPDSESSD</sequence>